<proteinExistence type="inferred from homology"/>
<gene>
    <name evidence="4" type="primary">ucsL</name>
</gene>
<protein>
    <recommendedName>
        <fullName evidence="4">Trans-enoyl reductase ucsL</fullName>
        <ecNumber evidence="3">1.-.-.-</ecNumber>
    </recommendedName>
    <alternativeName>
        <fullName evidence="4">UCS1025A pyrrolizidinone biosynthesis cluster protein L</fullName>
    </alternativeName>
</protein>
<evidence type="ECO:0000250" key="1">
    <source>
        <dbReference type="UniProtKB" id="Q9Y7D0"/>
    </source>
</evidence>
<evidence type="ECO:0000255" key="2"/>
<evidence type="ECO:0000269" key="3">
    <source>
    </source>
</evidence>
<evidence type="ECO:0000303" key="4">
    <source>
    </source>
</evidence>
<evidence type="ECO:0000305" key="5"/>
<evidence type="ECO:0000305" key="6">
    <source>
    </source>
</evidence>
<accession>A0A411KUQ4</accession>
<organism>
    <name type="scientific">Acremonium sp</name>
    <dbReference type="NCBI Taxonomy" id="2046025"/>
    <lineage>
        <taxon>Eukaryota</taxon>
        <taxon>Fungi</taxon>
        <taxon>Dikarya</taxon>
        <taxon>Ascomycota</taxon>
        <taxon>Pezizomycotina</taxon>
        <taxon>Sordariomycetes</taxon>
        <taxon>Hypocreomycetidae</taxon>
        <taxon>Hypocreales</taxon>
        <taxon>Hypocreales incertae sedis</taxon>
        <taxon>Acremonium</taxon>
    </lineage>
</organism>
<name>UCSL_ACRSP</name>
<feature type="chain" id="PRO_0000450540" description="Trans-enoyl reductase ucsL">
    <location>
        <begin position="1"/>
        <end position="400"/>
    </location>
</feature>
<feature type="binding site" evidence="1">
    <location>
        <begin position="50"/>
        <end position="53"/>
    </location>
    <ligand>
        <name>NADP(+)</name>
        <dbReference type="ChEBI" id="CHEBI:58349"/>
    </ligand>
</feature>
<feature type="binding site" evidence="2">
    <location>
        <begin position="145"/>
        <end position="152"/>
    </location>
    <ligand>
        <name>substrate</name>
    </ligand>
</feature>
<feature type="binding site" evidence="1">
    <location>
        <begin position="204"/>
        <end position="207"/>
    </location>
    <ligand>
        <name>NADP(+)</name>
        <dbReference type="ChEBI" id="CHEBI:58349"/>
    </ligand>
</feature>
<feature type="binding site" evidence="1">
    <location>
        <begin position="227"/>
        <end position="230"/>
    </location>
    <ligand>
        <name>NADP(+)</name>
        <dbReference type="ChEBI" id="CHEBI:58349"/>
    </ligand>
</feature>
<feature type="binding site" evidence="1">
    <location>
        <position position="245"/>
    </location>
    <ligand>
        <name>NADP(+)</name>
        <dbReference type="ChEBI" id="CHEBI:58349"/>
    </ligand>
</feature>
<feature type="binding site" evidence="1">
    <location>
        <begin position="292"/>
        <end position="293"/>
    </location>
    <ligand>
        <name>NADP(+)</name>
        <dbReference type="ChEBI" id="CHEBI:58349"/>
    </ligand>
</feature>
<feature type="binding site" evidence="2">
    <location>
        <begin position="313"/>
        <end position="317"/>
    </location>
    <ligand>
        <name>substrate</name>
    </ligand>
</feature>
<feature type="binding site" evidence="1">
    <location>
        <begin position="389"/>
        <end position="390"/>
    </location>
    <ligand>
        <name>NADP(+)</name>
        <dbReference type="ChEBI" id="CHEBI:58349"/>
    </ligand>
</feature>
<comment type="function">
    <text evidence="3 6">Trans-enoyl reductase; part of the gene cluster that mediates the biosynthesis of UCS1025A, a member of the pyrrolizidinone family that acts as a strong telomerase inhibitor and displays potent antibacterial and antitumor properties (PubMed:29373009). These compounds share a hemiaminal-containing pyrrolizidinone core fused with a gamma-lactone, giving a furopyrrolizidine that is connected to a decalin fragment (PubMed:29373009). The polyketide synthase module (PKS) of the PKS-NRPS ucsA is responsible for the synthesis of the polyketide backbone via the condensation of an acetyl-CoA starter unit with 6 malonyl-CoA units (PubMed:29373009). The downstream nonribosomal peptide synthetase (NRPS) module then amidates the carboxyl end of the polyketide with a 2S,3S-methylproline derived from L-isoleucine by the 2-oxoglutarate-dependent dioxygenase ucsF which converts L-isoleucine to (4S,5S)-4-methylpyrroline-5-carboxylate that is further converted to 2S,3S-methylproline by the pyrroline-5-carboxylate reductase ucsG (PubMed:29373009). Reductive release of the completed aminoacyl polyketide from the assembly line can form the 3-pyrrolin-2-one structure via an intramolecular Knoevenagel reaction (PubMed:29373009). Because ucsA lacks a designated enoylreductase (ER) domain, the required activity is provided the enoyl reductase ucsL (PubMed:29373009). This keto acyclic precursor is the substrate of the Diels-Alderase ucsH, that catalyzes the Diels-Alder cycloaddition (PubMed:29373009). Oxidation of the 3S-methyl group to a carboxylate by the cytochrome P450 monooxygenase ucsK allows an oxa-Michael cyclization that might involve the reductase/dehydrogenase ucsI and which furnishes the furopyrrolizidine (PubMed:29373009). The oxidase ucsJ likely plays a critical role in stereoselective reduction of the C5-C6 double bond to afford the required R-configured carboxylate group (Probable). Further enolization and oxidation at C5 by an unidentified enzyme affords the last intermediate that can undergo oxa-Michael cyclization to yield UCS1025A (Probable).</text>
</comment>
<comment type="pathway">
    <text evidence="3">Mycotoxin biosynthesis.</text>
</comment>
<comment type="subunit">
    <text evidence="1">Monomer.</text>
</comment>
<comment type="similarity">
    <text evidence="5">Belongs to the zinc-containing alcohol dehydrogenase family.</text>
</comment>
<keyword id="KW-0521">NADP</keyword>
<keyword id="KW-0547">Nucleotide-binding</keyword>
<keyword id="KW-0560">Oxidoreductase</keyword>
<dbReference type="EC" id="1.-.-.-" evidence="3"/>
<dbReference type="EMBL" id="MH375775">
    <property type="protein sequence ID" value="QBC88156.1"/>
    <property type="molecule type" value="Genomic_DNA"/>
</dbReference>
<dbReference type="SMR" id="A0A411KUQ4"/>
<dbReference type="GO" id="GO:0000166">
    <property type="term" value="F:nucleotide binding"/>
    <property type="evidence" value="ECO:0007669"/>
    <property type="project" value="UniProtKB-KW"/>
</dbReference>
<dbReference type="GO" id="GO:0016651">
    <property type="term" value="F:oxidoreductase activity, acting on NAD(P)H"/>
    <property type="evidence" value="ECO:0007669"/>
    <property type="project" value="InterPro"/>
</dbReference>
<dbReference type="CDD" id="cd08249">
    <property type="entry name" value="enoyl_reductase_like"/>
    <property type="match status" value="1"/>
</dbReference>
<dbReference type="Gene3D" id="3.90.180.10">
    <property type="entry name" value="Medium-chain alcohol dehydrogenases, catalytic domain"/>
    <property type="match status" value="1"/>
</dbReference>
<dbReference type="Gene3D" id="3.40.50.720">
    <property type="entry name" value="NAD(P)-binding Rossmann-like Domain"/>
    <property type="match status" value="1"/>
</dbReference>
<dbReference type="InterPro" id="IPR013154">
    <property type="entry name" value="ADH-like_N"/>
</dbReference>
<dbReference type="InterPro" id="IPR011032">
    <property type="entry name" value="GroES-like_sf"/>
</dbReference>
<dbReference type="InterPro" id="IPR036291">
    <property type="entry name" value="NAD(P)-bd_dom_sf"/>
</dbReference>
<dbReference type="InterPro" id="IPR020843">
    <property type="entry name" value="PKS_ER"/>
</dbReference>
<dbReference type="InterPro" id="IPR047122">
    <property type="entry name" value="Trans-enoyl_RdTase-like"/>
</dbReference>
<dbReference type="PANTHER" id="PTHR45348">
    <property type="entry name" value="HYPOTHETICAL OXIDOREDUCTASE (EUROFUNG)"/>
    <property type="match status" value="1"/>
</dbReference>
<dbReference type="PANTHER" id="PTHR45348:SF1">
    <property type="entry name" value="TRANS-ENOYL REDUCTASE STHE"/>
    <property type="match status" value="1"/>
</dbReference>
<dbReference type="Pfam" id="PF08240">
    <property type="entry name" value="ADH_N"/>
    <property type="match status" value="1"/>
</dbReference>
<dbReference type="SMART" id="SM00829">
    <property type="entry name" value="PKS_ER"/>
    <property type="match status" value="1"/>
</dbReference>
<dbReference type="SUPFAM" id="SSF50129">
    <property type="entry name" value="GroES-like"/>
    <property type="match status" value="1"/>
</dbReference>
<dbReference type="SUPFAM" id="SSF51735">
    <property type="entry name" value="NAD(P)-binding Rossmann-fold domains"/>
    <property type="match status" value="1"/>
</dbReference>
<sequence length="400" mass="42535">MGSLIQTPSTQTAVVTTAEGRHQVAHGRRVPSCGPRSVLVRIKAVALNATDHKMPARVKREGLTSGCDFAGEVVAVGEQANDEPRRCELPRSWAPGDRVFGVVYGSNPGQPEWGAFAEYVEADPIMLCHVPDGWDWETAASVGGSVHGSVALCLFGDGNLALDYSNLKAQADSSSADAVTNQSPKPESFTKEELRKVVLVYGGSTACGTMALQLLRLAGYTPITTCSPRNFGLVESYGAVAAFDYHSETCATEMKTYTRSSLVAALDCLGNTQSAALCYAALGRAGGRYVALEKYPDSVSATRKLVKPSWVMGPVMFGRELQLADGYSQPADLAARAFACDWYPLAERLVHQERLRAHPVTIAGPSPPVGDKWADAILCGLQELRDGSVSASKLVVPVAA</sequence>
<reference key="1">
    <citation type="journal article" date="2018" name="J. Am. Chem. Soc.">
        <title>Genome mining and assembly-line biosynthesis of the UCS1025A pyrrolizidinone family of fungal alkaloids.</title>
        <authorList>
            <person name="Li L."/>
            <person name="Tang M.C."/>
            <person name="Tang S."/>
            <person name="Gao S."/>
            <person name="Soliman S."/>
            <person name="Hang L."/>
            <person name="Xu W."/>
            <person name="Ye T."/>
            <person name="Watanabe K."/>
            <person name="Tang Y."/>
        </authorList>
    </citation>
    <scope>NUCLEOTIDE SEQUENCE [GENOMIC DNA]</scope>
    <scope>FUNCTION</scope>
    <scope>PATHWAY</scope>
    <source>
        <strain>KY4917</strain>
    </source>
</reference>